<feature type="signal peptide" evidence="2">
    <location>
        <begin position="1"/>
        <end position="27"/>
    </location>
</feature>
<feature type="chain" id="PRO_0000017310" description="Defensin-like protein 76">
    <location>
        <begin position="28"/>
        <end position="85"/>
    </location>
</feature>
<feature type="disulfide bond" evidence="1">
    <location>
        <begin position="35"/>
        <end position="70"/>
    </location>
</feature>
<feature type="disulfide bond" evidence="1">
    <location>
        <begin position="40"/>
        <end position="59"/>
    </location>
</feature>
<feature type="disulfide bond" evidence="1">
    <location>
        <begin position="44"/>
        <end position="68"/>
    </location>
</feature>
<feature type="disulfide bond" evidence="1">
    <location>
        <begin position="48"/>
        <end position="69"/>
    </location>
</feature>
<gene>
    <name type="primary">LCR86</name>
    <name type="ordered locus">At5g48953</name>
    <name type="ORF">K19E20</name>
</gene>
<name>DEF76_ARATH</name>
<dbReference type="EMBL" id="AB017061">
    <property type="status" value="NOT_ANNOTATED_CDS"/>
    <property type="molecule type" value="Genomic_DNA"/>
</dbReference>
<dbReference type="EMBL" id="CP002688">
    <property type="protein sequence ID" value="AED95749.1"/>
    <property type="molecule type" value="Genomic_DNA"/>
</dbReference>
<dbReference type="RefSeq" id="NP_001032040.1">
    <property type="nucleotide sequence ID" value="NM_001036963.2"/>
</dbReference>
<dbReference type="STRING" id="3702.P82795"/>
<dbReference type="iPTMnet" id="P82795"/>
<dbReference type="PaxDb" id="3702-AT5G48953.1"/>
<dbReference type="ProteomicsDB" id="224110"/>
<dbReference type="EnsemblPlants" id="AT5G48953.1">
    <property type="protein sequence ID" value="AT5G48953.1"/>
    <property type="gene ID" value="AT5G48953"/>
</dbReference>
<dbReference type="GeneID" id="3771471"/>
<dbReference type="Gramene" id="AT5G48953.1">
    <property type="protein sequence ID" value="AT5G48953.1"/>
    <property type="gene ID" value="AT5G48953"/>
</dbReference>
<dbReference type="KEGG" id="ath:AT5G48953"/>
<dbReference type="Araport" id="AT5G48953"/>
<dbReference type="TAIR" id="AT5G48953">
    <property type="gene designation" value="LCR86"/>
</dbReference>
<dbReference type="HOGENOM" id="CLU_2545788_0_0_1"/>
<dbReference type="InParanoid" id="P82795"/>
<dbReference type="OMA" id="ECTSVCD"/>
<dbReference type="PhylomeDB" id="P82795"/>
<dbReference type="PRO" id="PR:P82795"/>
<dbReference type="Proteomes" id="UP000006548">
    <property type="component" value="Chromosome 5"/>
</dbReference>
<dbReference type="ExpressionAtlas" id="P82795">
    <property type="expression patterns" value="baseline"/>
</dbReference>
<dbReference type="GO" id="GO:0005576">
    <property type="term" value="C:extracellular region"/>
    <property type="evidence" value="ECO:0007669"/>
    <property type="project" value="UniProtKB-SubCell"/>
</dbReference>
<dbReference type="GO" id="GO:0050832">
    <property type="term" value="P:defense response to fungus"/>
    <property type="evidence" value="ECO:0007669"/>
    <property type="project" value="UniProtKB-KW"/>
</dbReference>
<dbReference type="GO" id="GO:0031640">
    <property type="term" value="P:killing of cells of another organism"/>
    <property type="evidence" value="ECO:0007669"/>
    <property type="project" value="UniProtKB-KW"/>
</dbReference>
<comment type="subcellular location">
    <subcellularLocation>
        <location evidence="1">Secreted</location>
    </subcellularLocation>
</comment>
<comment type="similarity">
    <text evidence="3">Belongs to the DEFL family.</text>
</comment>
<accession>P82795</accession>
<organism evidence="3">
    <name type="scientific">Arabidopsis thaliana</name>
    <name type="common">Mouse-ear cress</name>
    <dbReference type="NCBI Taxonomy" id="3702"/>
    <lineage>
        <taxon>Eukaryota</taxon>
        <taxon>Viridiplantae</taxon>
        <taxon>Streptophyta</taxon>
        <taxon>Embryophyta</taxon>
        <taxon>Tracheophyta</taxon>
        <taxon>Spermatophyta</taxon>
        <taxon>Magnoliopsida</taxon>
        <taxon>eudicotyledons</taxon>
        <taxon>Gunneridae</taxon>
        <taxon>Pentapetalae</taxon>
        <taxon>rosids</taxon>
        <taxon>malvids</taxon>
        <taxon>Brassicales</taxon>
        <taxon>Brassicaceae</taxon>
        <taxon>Camelineae</taxon>
        <taxon>Arabidopsis</taxon>
    </lineage>
</organism>
<sequence length="85" mass="9536">MQNQKHSHILTAITIVLLFAMAAKINAIDVHDAMCYRSECTSVCDQICLSHGYTNGWYCGTFRLHTGCCCLKKKELNQIISPSKN</sequence>
<evidence type="ECO:0000250" key="1"/>
<evidence type="ECO:0000255" key="2"/>
<evidence type="ECO:0000305" key="3"/>
<protein>
    <recommendedName>
        <fullName>Defensin-like protein 76</fullName>
    </recommendedName>
    <alternativeName>
        <fullName>Low-molecular-weight cysteine-rich protein 86</fullName>
        <shortName>Protein LCR86</shortName>
    </alternativeName>
</protein>
<reference evidence="3" key="1">
    <citation type="journal article" date="1999" name="DNA Res.">
        <title>Structural analysis of Arabidopsis thaliana chromosome 5. IX. Sequence features of the regions of 1,011,550 bp covered by seventeen P1 and TAC clones.</title>
        <authorList>
            <person name="Kaneko T."/>
            <person name="Katoh T."/>
            <person name="Sato S."/>
            <person name="Nakamura Y."/>
            <person name="Asamizu E."/>
            <person name="Kotani H."/>
            <person name="Miyajima N."/>
            <person name="Tabata S."/>
        </authorList>
    </citation>
    <scope>NUCLEOTIDE SEQUENCE [LARGE SCALE GENOMIC DNA]</scope>
    <source>
        <strain>cv. Columbia</strain>
    </source>
</reference>
<reference key="2">
    <citation type="journal article" date="2017" name="Plant J.">
        <title>Araport11: a complete reannotation of the Arabidopsis thaliana reference genome.</title>
        <authorList>
            <person name="Cheng C.Y."/>
            <person name="Krishnakumar V."/>
            <person name="Chan A.P."/>
            <person name="Thibaud-Nissen F."/>
            <person name="Schobel S."/>
            <person name="Town C.D."/>
        </authorList>
    </citation>
    <scope>GENOME REANNOTATION</scope>
    <source>
        <strain>cv. Columbia</strain>
    </source>
</reference>
<reference evidence="3" key="3">
    <citation type="journal article" date="2001" name="Plant Mol. Biol.">
        <title>Two large Arabidopsis thaliana gene families are homologous to the Brassica gene superfamily that encodes pollen coat proteins and the male component of the self-incompatibility response.</title>
        <authorList>
            <person name="Vanoosthuyse V."/>
            <person name="Miege C."/>
            <person name="Dumas C."/>
            <person name="Cock J.M."/>
        </authorList>
    </citation>
    <scope>IDENTIFICATION</scope>
</reference>
<reference key="4">
    <citation type="journal article" date="2005" name="Plant Physiol.">
        <title>Genome organization of more than 300 defensin-like genes in Arabidopsis.</title>
        <authorList>
            <person name="Silverstein K.A.T."/>
            <person name="Graham M.A."/>
            <person name="Paape T.D."/>
            <person name="VandenBosch K.A."/>
        </authorList>
    </citation>
    <scope>GENE FAMILY</scope>
</reference>
<keyword id="KW-0929">Antimicrobial</keyword>
<keyword id="KW-1015">Disulfide bond</keyword>
<keyword id="KW-0295">Fungicide</keyword>
<keyword id="KW-0611">Plant defense</keyword>
<keyword id="KW-1185">Reference proteome</keyword>
<keyword id="KW-0964">Secreted</keyword>
<keyword id="KW-0732">Signal</keyword>
<proteinExistence type="evidence at transcript level"/>